<name>DCUP_RHOJR</name>
<evidence type="ECO:0000255" key="1">
    <source>
        <dbReference type="HAMAP-Rule" id="MF_00218"/>
    </source>
</evidence>
<evidence type="ECO:0000305" key="2"/>
<keyword id="KW-0963">Cytoplasm</keyword>
<keyword id="KW-0210">Decarboxylase</keyword>
<keyword id="KW-0456">Lyase</keyword>
<keyword id="KW-0627">Porphyrin biosynthesis</keyword>
<gene>
    <name evidence="1" type="primary">hemE</name>
    <name type="ordered locus">RHA1_ro06858</name>
</gene>
<sequence length="355" mass="37434">MSERATYAARRVLPDAPLLAAAEGRTPGRRPVWFMRQAGRSLPEYREIRSGIGMLESCFDPALVCEITMQPVRRHGVDAAILFSDIVVPLKAAGIDLDIVAGTGPVVANPVRSIADVAALPRLVPEEVGAVAQAVQLLTAELGSTPLIGFAGAPFTLASYLVEGGPSRNHERTKALMHSDPRTWHALLGTLADTTITFLQTQLRAGVDAIQLFDSWAGALSLAEYREFVLPHSERVFAEVESAKVPRIHFGVGTGELLGAMGEAGADVVGVDWRIPLDVAARRVGPGKALQGNLDPAVLFAGPAAVEKQVRRITAEADAALAAGATGHIFNLGHGVLPDTDPGALTALVELVHSL</sequence>
<dbReference type="EC" id="4.1.1.37" evidence="1"/>
<dbReference type="EMBL" id="CP000431">
    <property type="protein sequence ID" value="ABG98630.1"/>
    <property type="status" value="ALT_INIT"/>
    <property type="molecule type" value="Genomic_DNA"/>
</dbReference>
<dbReference type="SMR" id="Q0S1F6"/>
<dbReference type="KEGG" id="rha:RHA1_ro06858"/>
<dbReference type="eggNOG" id="COG0407">
    <property type="taxonomic scope" value="Bacteria"/>
</dbReference>
<dbReference type="HOGENOM" id="CLU_040933_0_1_11"/>
<dbReference type="UniPathway" id="UPA00251">
    <property type="reaction ID" value="UER00321"/>
</dbReference>
<dbReference type="Proteomes" id="UP000008710">
    <property type="component" value="Chromosome"/>
</dbReference>
<dbReference type="GO" id="GO:0005829">
    <property type="term" value="C:cytosol"/>
    <property type="evidence" value="ECO:0007669"/>
    <property type="project" value="TreeGrafter"/>
</dbReference>
<dbReference type="GO" id="GO:0004853">
    <property type="term" value="F:uroporphyrinogen decarboxylase activity"/>
    <property type="evidence" value="ECO:0007669"/>
    <property type="project" value="UniProtKB-UniRule"/>
</dbReference>
<dbReference type="GO" id="GO:0006782">
    <property type="term" value="P:protoporphyrinogen IX biosynthetic process"/>
    <property type="evidence" value="ECO:0007669"/>
    <property type="project" value="UniProtKB-UniRule"/>
</dbReference>
<dbReference type="CDD" id="cd00717">
    <property type="entry name" value="URO-D"/>
    <property type="match status" value="1"/>
</dbReference>
<dbReference type="FunFam" id="3.20.20.210:FF:000008">
    <property type="entry name" value="Uroporphyrinogen decarboxylase"/>
    <property type="match status" value="1"/>
</dbReference>
<dbReference type="Gene3D" id="3.20.20.210">
    <property type="match status" value="1"/>
</dbReference>
<dbReference type="HAMAP" id="MF_00218">
    <property type="entry name" value="URO_D"/>
    <property type="match status" value="1"/>
</dbReference>
<dbReference type="InterPro" id="IPR038071">
    <property type="entry name" value="UROD/MetE-like_sf"/>
</dbReference>
<dbReference type="InterPro" id="IPR006361">
    <property type="entry name" value="Uroporphyrinogen_deCO2ase_HemE"/>
</dbReference>
<dbReference type="InterPro" id="IPR000257">
    <property type="entry name" value="Uroporphyrinogen_deCOase"/>
</dbReference>
<dbReference type="NCBIfam" id="TIGR01464">
    <property type="entry name" value="hemE"/>
    <property type="match status" value="1"/>
</dbReference>
<dbReference type="PANTHER" id="PTHR21091">
    <property type="entry name" value="METHYLTETRAHYDROFOLATE:HOMOCYSTEINE METHYLTRANSFERASE RELATED"/>
    <property type="match status" value="1"/>
</dbReference>
<dbReference type="PANTHER" id="PTHR21091:SF169">
    <property type="entry name" value="UROPORPHYRINOGEN DECARBOXYLASE"/>
    <property type="match status" value="1"/>
</dbReference>
<dbReference type="Pfam" id="PF01208">
    <property type="entry name" value="URO-D"/>
    <property type="match status" value="1"/>
</dbReference>
<dbReference type="SUPFAM" id="SSF51726">
    <property type="entry name" value="UROD/MetE-like"/>
    <property type="match status" value="1"/>
</dbReference>
<dbReference type="PROSITE" id="PS00906">
    <property type="entry name" value="UROD_1"/>
    <property type="match status" value="1"/>
</dbReference>
<dbReference type="PROSITE" id="PS00907">
    <property type="entry name" value="UROD_2"/>
    <property type="match status" value="1"/>
</dbReference>
<comment type="function">
    <text evidence="1">Catalyzes the decarboxylation of four acetate groups of uroporphyrinogen-III to yield coproporphyrinogen-III.</text>
</comment>
<comment type="catalytic activity">
    <reaction evidence="1">
        <text>uroporphyrinogen III + 4 H(+) = coproporphyrinogen III + 4 CO2</text>
        <dbReference type="Rhea" id="RHEA:19865"/>
        <dbReference type="ChEBI" id="CHEBI:15378"/>
        <dbReference type="ChEBI" id="CHEBI:16526"/>
        <dbReference type="ChEBI" id="CHEBI:57308"/>
        <dbReference type="ChEBI" id="CHEBI:57309"/>
        <dbReference type="EC" id="4.1.1.37"/>
    </reaction>
</comment>
<comment type="pathway">
    <text evidence="1">Porphyrin-containing compound metabolism; protoporphyrin-IX biosynthesis; coproporphyrinogen-III from 5-aminolevulinate: step 4/4.</text>
</comment>
<comment type="subunit">
    <text evidence="1">Homodimer.</text>
</comment>
<comment type="subcellular location">
    <subcellularLocation>
        <location evidence="1">Cytoplasm</location>
    </subcellularLocation>
</comment>
<comment type="similarity">
    <text evidence="1">Belongs to the uroporphyrinogen decarboxylase family.</text>
</comment>
<comment type="sequence caution" evidence="2">
    <conflict type="erroneous initiation">
        <sequence resource="EMBL-CDS" id="ABG98630"/>
    </conflict>
</comment>
<reference key="1">
    <citation type="journal article" date="2006" name="Proc. Natl. Acad. Sci. U.S.A.">
        <title>The complete genome of Rhodococcus sp. RHA1 provides insights into a catabolic powerhouse.</title>
        <authorList>
            <person name="McLeod M.P."/>
            <person name="Warren R.L."/>
            <person name="Hsiao W.W.L."/>
            <person name="Araki N."/>
            <person name="Myhre M."/>
            <person name="Fernandes C."/>
            <person name="Miyazawa D."/>
            <person name="Wong W."/>
            <person name="Lillquist A.L."/>
            <person name="Wang D."/>
            <person name="Dosanjh M."/>
            <person name="Hara H."/>
            <person name="Petrescu A."/>
            <person name="Morin R.D."/>
            <person name="Yang G."/>
            <person name="Stott J.M."/>
            <person name="Schein J.E."/>
            <person name="Shin H."/>
            <person name="Smailus D."/>
            <person name="Siddiqui A.S."/>
            <person name="Marra M.A."/>
            <person name="Jones S.J.M."/>
            <person name="Holt R."/>
            <person name="Brinkman F.S.L."/>
            <person name="Miyauchi K."/>
            <person name="Fukuda M."/>
            <person name="Davies J.E."/>
            <person name="Mohn W.W."/>
            <person name="Eltis L.D."/>
        </authorList>
    </citation>
    <scope>NUCLEOTIDE SEQUENCE [LARGE SCALE GENOMIC DNA]</scope>
    <source>
        <strain>RHA1</strain>
    </source>
</reference>
<proteinExistence type="inferred from homology"/>
<feature type="chain" id="PRO_0000325681" description="Uroporphyrinogen decarboxylase">
    <location>
        <begin position="1"/>
        <end position="355"/>
    </location>
</feature>
<feature type="binding site" evidence="1">
    <location>
        <begin position="36"/>
        <end position="40"/>
    </location>
    <ligand>
        <name>substrate</name>
    </ligand>
</feature>
<feature type="binding site" evidence="1">
    <location>
        <position position="85"/>
    </location>
    <ligand>
        <name>substrate</name>
    </ligand>
</feature>
<feature type="binding site" evidence="1">
    <location>
        <position position="160"/>
    </location>
    <ligand>
        <name>substrate</name>
    </ligand>
</feature>
<feature type="binding site" evidence="1">
    <location>
        <position position="215"/>
    </location>
    <ligand>
        <name>substrate</name>
    </ligand>
</feature>
<feature type="binding site" evidence="1">
    <location>
        <position position="334"/>
    </location>
    <ligand>
        <name>substrate</name>
    </ligand>
</feature>
<feature type="site" description="Transition state stabilizer" evidence="1">
    <location>
        <position position="85"/>
    </location>
</feature>
<organism>
    <name type="scientific">Rhodococcus jostii (strain RHA1)</name>
    <dbReference type="NCBI Taxonomy" id="101510"/>
    <lineage>
        <taxon>Bacteria</taxon>
        <taxon>Bacillati</taxon>
        <taxon>Actinomycetota</taxon>
        <taxon>Actinomycetes</taxon>
        <taxon>Mycobacteriales</taxon>
        <taxon>Nocardiaceae</taxon>
        <taxon>Rhodococcus</taxon>
    </lineage>
</organism>
<accession>Q0S1F6</accession>
<protein>
    <recommendedName>
        <fullName evidence="1">Uroporphyrinogen decarboxylase</fullName>
        <shortName evidence="1">UPD</shortName>
        <shortName evidence="1">URO-D</shortName>
        <ecNumber evidence="1">4.1.1.37</ecNumber>
    </recommendedName>
</protein>